<evidence type="ECO:0000255" key="1">
    <source>
        <dbReference type="HAMAP-Rule" id="MF_00362"/>
    </source>
</evidence>
<evidence type="ECO:0000305" key="2"/>
<reference key="1">
    <citation type="journal article" date="2009" name="PLoS ONE">
        <title>Non mycobacterial virulence genes in the genome of the emerging pathogen Mycobacterium abscessus.</title>
        <authorList>
            <person name="Ripoll F."/>
            <person name="Pasek S."/>
            <person name="Schenowitz C."/>
            <person name="Dossat C."/>
            <person name="Barbe V."/>
            <person name="Rottman M."/>
            <person name="Macheras E."/>
            <person name="Heym B."/>
            <person name="Herrmann J.L."/>
            <person name="Daffe M."/>
            <person name="Brosch R."/>
            <person name="Risler J.L."/>
            <person name="Gaillard J.L."/>
        </authorList>
    </citation>
    <scope>NUCLEOTIDE SEQUENCE [LARGE SCALE GENOMIC DNA]</scope>
    <source>
        <strain>ATCC 19977 / DSM 44196 / CCUG 20993 / CIP 104536 / JCM 13569 / NCTC 13031 / TMC 1543 / L948</strain>
    </source>
</reference>
<protein>
    <recommendedName>
        <fullName evidence="1">Large ribosomal subunit protein uL10</fullName>
    </recommendedName>
    <alternativeName>
        <fullName evidence="2">50S ribosomal protein L10</fullName>
    </alternativeName>
</protein>
<gene>
    <name evidence="1" type="primary">rplJ</name>
    <name type="ordered locus">MAB_3877c</name>
</gene>
<dbReference type="EMBL" id="CU458896">
    <property type="protein sequence ID" value="CAM63951.1"/>
    <property type="molecule type" value="Genomic_DNA"/>
</dbReference>
<dbReference type="RefSeq" id="WP_005055400.1">
    <property type="nucleotide sequence ID" value="NZ_MLCG01000001.1"/>
</dbReference>
<dbReference type="SMR" id="B1MH70"/>
<dbReference type="GeneID" id="93380815"/>
<dbReference type="KEGG" id="mab:MAB_3877c"/>
<dbReference type="Proteomes" id="UP000007137">
    <property type="component" value="Chromosome"/>
</dbReference>
<dbReference type="GO" id="GO:0015934">
    <property type="term" value="C:large ribosomal subunit"/>
    <property type="evidence" value="ECO:0007669"/>
    <property type="project" value="InterPro"/>
</dbReference>
<dbReference type="GO" id="GO:0070180">
    <property type="term" value="F:large ribosomal subunit rRNA binding"/>
    <property type="evidence" value="ECO:0007669"/>
    <property type="project" value="UniProtKB-UniRule"/>
</dbReference>
<dbReference type="GO" id="GO:0003735">
    <property type="term" value="F:structural constituent of ribosome"/>
    <property type="evidence" value="ECO:0007669"/>
    <property type="project" value="InterPro"/>
</dbReference>
<dbReference type="GO" id="GO:0006412">
    <property type="term" value="P:translation"/>
    <property type="evidence" value="ECO:0007669"/>
    <property type="project" value="UniProtKB-UniRule"/>
</dbReference>
<dbReference type="CDD" id="cd05797">
    <property type="entry name" value="Ribosomal_L10"/>
    <property type="match status" value="1"/>
</dbReference>
<dbReference type="Gene3D" id="3.30.70.1730">
    <property type="match status" value="1"/>
</dbReference>
<dbReference type="Gene3D" id="6.10.250.290">
    <property type="match status" value="1"/>
</dbReference>
<dbReference type="HAMAP" id="MF_00362">
    <property type="entry name" value="Ribosomal_uL10"/>
    <property type="match status" value="1"/>
</dbReference>
<dbReference type="InterPro" id="IPR001790">
    <property type="entry name" value="Ribosomal_uL10"/>
</dbReference>
<dbReference type="InterPro" id="IPR043141">
    <property type="entry name" value="Ribosomal_uL10-like_sf"/>
</dbReference>
<dbReference type="InterPro" id="IPR022973">
    <property type="entry name" value="Ribosomal_uL10_bac"/>
</dbReference>
<dbReference type="InterPro" id="IPR047865">
    <property type="entry name" value="Ribosomal_uL10_bac_type"/>
</dbReference>
<dbReference type="InterPro" id="IPR002363">
    <property type="entry name" value="Ribosomal_uL10_CS_bac"/>
</dbReference>
<dbReference type="NCBIfam" id="NF000955">
    <property type="entry name" value="PRK00099.1-1"/>
    <property type="match status" value="1"/>
</dbReference>
<dbReference type="PANTHER" id="PTHR11560">
    <property type="entry name" value="39S RIBOSOMAL PROTEIN L10, MITOCHONDRIAL"/>
    <property type="match status" value="1"/>
</dbReference>
<dbReference type="Pfam" id="PF00466">
    <property type="entry name" value="Ribosomal_L10"/>
    <property type="match status" value="1"/>
</dbReference>
<dbReference type="SUPFAM" id="SSF160369">
    <property type="entry name" value="Ribosomal protein L10-like"/>
    <property type="match status" value="1"/>
</dbReference>
<dbReference type="PROSITE" id="PS01109">
    <property type="entry name" value="RIBOSOMAL_L10"/>
    <property type="match status" value="1"/>
</dbReference>
<accession>B1MH70</accession>
<keyword id="KW-1185">Reference proteome</keyword>
<keyword id="KW-0687">Ribonucleoprotein</keyword>
<keyword id="KW-0689">Ribosomal protein</keyword>
<keyword id="KW-0694">RNA-binding</keyword>
<keyword id="KW-0699">rRNA-binding</keyword>
<name>RL10_MYCA9</name>
<feature type="chain" id="PRO_1000120989" description="Large ribosomal subunit protein uL10">
    <location>
        <begin position="1"/>
        <end position="176"/>
    </location>
</feature>
<sequence length="176" mass="18168">MAKTDKVTAVAEITEQFKDSTATVITEYRGLSVSALATLRRSLGASATYAVAKNTLVKRAAADAGVEGLDELFAGPTAIAFIKGEPVDAAKAIKTFAKDNKALIIKGGYMDGRALSVAEVERIADLESREVLLAKLAGAMKGNLNKAAGLFAAPASQVARLAAALQEKKAGEESAA</sequence>
<comment type="function">
    <text evidence="1">Forms part of the ribosomal stalk, playing a central role in the interaction of the ribosome with GTP-bound translation factors.</text>
</comment>
<comment type="subunit">
    <text evidence="1">Part of the ribosomal stalk of the 50S ribosomal subunit. The N-terminus interacts with L11 and the large rRNA to form the base of the stalk. The C-terminus forms an elongated spine to which L12 dimers bind in a sequential fashion forming a multimeric L10(L12)X complex.</text>
</comment>
<comment type="similarity">
    <text evidence="1">Belongs to the universal ribosomal protein uL10 family.</text>
</comment>
<organism>
    <name type="scientific">Mycobacteroides abscessus (strain ATCC 19977 / DSM 44196 / CCUG 20993 / CIP 104536 / JCM 13569 / NCTC 13031 / TMC 1543 / L948)</name>
    <name type="common">Mycobacterium abscessus</name>
    <dbReference type="NCBI Taxonomy" id="561007"/>
    <lineage>
        <taxon>Bacteria</taxon>
        <taxon>Bacillati</taxon>
        <taxon>Actinomycetota</taxon>
        <taxon>Actinomycetes</taxon>
        <taxon>Mycobacteriales</taxon>
        <taxon>Mycobacteriaceae</taxon>
        <taxon>Mycobacteroides</taxon>
        <taxon>Mycobacteroides abscessus</taxon>
    </lineage>
</organism>
<proteinExistence type="inferred from homology"/>